<proteinExistence type="evidence at transcript level"/>
<gene>
    <name type="primary">EED</name>
    <name type="ORF">RCJMB04_10n8</name>
</gene>
<protein>
    <recommendedName>
        <fullName>Polycomb protein EED</fullName>
    </recommendedName>
</protein>
<organism>
    <name type="scientific">Gallus gallus</name>
    <name type="common">Chicken</name>
    <dbReference type="NCBI Taxonomy" id="9031"/>
    <lineage>
        <taxon>Eukaryota</taxon>
        <taxon>Metazoa</taxon>
        <taxon>Chordata</taxon>
        <taxon>Craniata</taxon>
        <taxon>Vertebrata</taxon>
        <taxon>Euteleostomi</taxon>
        <taxon>Archelosauria</taxon>
        <taxon>Archosauria</taxon>
        <taxon>Dinosauria</taxon>
        <taxon>Saurischia</taxon>
        <taxon>Theropoda</taxon>
        <taxon>Coelurosauria</taxon>
        <taxon>Aves</taxon>
        <taxon>Neognathae</taxon>
        <taxon>Galloanserae</taxon>
        <taxon>Galliformes</taxon>
        <taxon>Phasianidae</taxon>
        <taxon>Phasianinae</taxon>
        <taxon>Gallus</taxon>
    </lineage>
</organism>
<keyword id="KW-0156">Chromatin regulator</keyword>
<keyword id="KW-0539">Nucleus</keyword>
<keyword id="KW-1185">Reference proteome</keyword>
<keyword id="KW-0677">Repeat</keyword>
<keyword id="KW-0678">Repressor</keyword>
<keyword id="KW-0804">Transcription</keyword>
<keyword id="KW-0805">Transcription regulation</keyword>
<keyword id="KW-0853">WD repeat</keyword>
<reference key="1">
    <citation type="journal article" date="2005" name="Genome Biol.">
        <title>Full-length cDNAs from chicken bursal lymphocytes to facilitate gene function analysis.</title>
        <authorList>
            <person name="Caldwell R.B."/>
            <person name="Kierzek A.M."/>
            <person name="Arakawa H."/>
            <person name="Bezzubov Y."/>
            <person name="Zaim J."/>
            <person name="Fiedler P."/>
            <person name="Kutter S."/>
            <person name="Blagodatski A."/>
            <person name="Kostovska D."/>
            <person name="Koter M."/>
            <person name="Plachy J."/>
            <person name="Carninci P."/>
            <person name="Hayashizaki Y."/>
            <person name="Buerstedde J.-M."/>
        </authorList>
    </citation>
    <scope>NUCLEOTIDE SEQUENCE [LARGE SCALE MRNA]</scope>
    <source>
        <strain>CB</strain>
        <tissue>Bursa of Fabricius</tissue>
    </source>
</reference>
<evidence type="ECO:0000250" key="1"/>
<evidence type="ECO:0000256" key="2">
    <source>
        <dbReference type="SAM" id="MobiDB-lite"/>
    </source>
</evidence>
<evidence type="ECO:0000305" key="3"/>
<comment type="function">
    <text evidence="1">Polycomb group (PcG) protein. Component of the PRC2/EED-EZH2 complex, which methylates 'Lys-9' and 'Lys-27' of histone H3, leading to transcriptional repression of the affected target gene (By similarity).</text>
</comment>
<comment type="subunit">
    <text evidence="1">Component of the PRC2/EED-EZH2 complex.</text>
</comment>
<comment type="subcellular location">
    <subcellularLocation>
        <location evidence="1">Nucleus</location>
    </subcellularLocation>
</comment>
<comment type="similarity">
    <text evidence="3">Belongs to the WD repeat ESC family.</text>
</comment>
<accession>Q5ZKH3</accession>
<sequence>MSERGEAPAAAASAGAGGEMPAKKQKLSSDENSNPGDLSGDENDDAVSIESGTNTERPDTPTNTPNAPGRKSWGKGKWKSKKCKYSFKCVNSLKEDHGQPLFGVQFNWHSKEGDPLVFATVGSNRVTLYECHSQGEIRLLQSYVDADADENFYTCAWTYDSNTSHPLLAVAGSRGIIRIINPITMQCIKHYVGHGNAINELKFHPRDPNLLLSVSKDHALRLWNIQTDTLVAIFGGVEGHRDEVLSADYDLLGEKIMSCGMDHSLKLWRINSKRMINAIKESYEYNPNKTNRPFISQKIHFPDFSTRDIHRNYVDCVRWLGDLILSKSCENAIVCWKPGKMEDDIDKIKPSESNVTILGRFDYSQCDIWYMRFSMDFWQKMLALGNQVGKLYVWDLEIEDPHKAKCTTLTHPKCVAAIRQTSFSRDSSILIAVCDDASIWRWDRLR</sequence>
<name>EED_CHICK</name>
<feature type="chain" id="PRO_0000343727" description="Polycomb protein EED">
    <location>
        <begin position="1"/>
        <end position="446"/>
    </location>
</feature>
<feature type="repeat" description="WD 1">
    <location>
        <begin position="96"/>
        <end position="139"/>
    </location>
</feature>
<feature type="repeat" description="WD 2">
    <location>
        <begin position="147"/>
        <end position="190"/>
    </location>
</feature>
<feature type="repeat" description="WD 3">
    <location>
        <begin position="193"/>
        <end position="233"/>
    </location>
</feature>
<feature type="repeat" description="WD 4">
    <location>
        <begin position="239"/>
        <end position="280"/>
    </location>
</feature>
<feature type="repeat" description="WD 5">
    <location>
        <begin position="309"/>
        <end position="346"/>
    </location>
</feature>
<feature type="repeat" description="WD 6">
    <location>
        <begin position="364"/>
        <end position="404"/>
    </location>
</feature>
<feature type="repeat" description="WD 7">
    <location>
        <begin position="413"/>
        <end position="446"/>
    </location>
</feature>
<feature type="region of interest" description="Disordered" evidence="2">
    <location>
        <begin position="1"/>
        <end position="77"/>
    </location>
</feature>
<feature type="compositionally biased region" description="Polar residues" evidence="2">
    <location>
        <begin position="50"/>
        <end position="66"/>
    </location>
</feature>
<dbReference type="EMBL" id="AJ720111">
    <property type="protein sequence ID" value="CAG31770.1"/>
    <property type="molecule type" value="mRNA"/>
</dbReference>
<dbReference type="RefSeq" id="NP_001026547.1">
    <property type="nucleotide sequence ID" value="NM_001031376.1"/>
</dbReference>
<dbReference type="SMR" id="Q5ZKH3"/>
<dbReference type="FunCoup" id="Q5ZKH3">
    <property type="interactions" value="2039"/>
</dbReference>
<dbReference type="STRING" id="9031.ENSGALP00000057840"/>
<dbReference type="PaxDb" id="9031-ENSGALP00000022724"/>
<dbReference type="GeneID" id="426381"/>
<dbReference type="KEGG" id="gga:426381"/>
<dbReference type="CTD" id="8726"/>
<dbReference type="VEuPathDB" id="HostDB:geneid_426381"/>
<dbReference type="eggNOG" id="KOG1034">
    <property type="taxonomic scope" value="Eukaryota"/>
</dbReference>
<dbReference type="HOGENOM" id="CLU_032683_1_0_1"/>
<dbReference type="InParanoid" id="Q5ZKH3"/>
<dbReference type="OrthoDB" id="7318948at2759"/>
<dbReference type="PhylomeDB" id="Q5ZKH3"/>
<dbReference type="Reactome" id="R-GGA-212300">
    <property type="pathway name" value="PRC2 methylates histones and DNA"/>
</dbReference>
<dbReference type="Reactome" id="R-GGA-2559580">
    <property type="pathway name" value="Oxidative Stress Induced Senescence"/>
</dbReference>
<dbReference type="Reactome" id="R-GGA-8943724">
    <property type="pathway name" value="Regulation of PTEN gene transcription"/>
</dbReference>
<dbReference type="Reactome" id="R-GGA-8953750">
    <property type="pathway name" value="Transcriptional Regulation by E2F6"/>
</dbReference>
<dbReference type="PRO" id="PR:Q5ZKH3"/>
<dbReference type="Proteomes" id="UP000000539">
    <property type="component" value="Chromosome 1"/>
</dbReference>
<dbReference type="Bgee" id="ENSGALG00000014060">
    <property type="expression patterns" value="Expressed in spleen and 12 other cell types or tissues"/>
</dbReference>
<dbReference type="GO" id="GO:0035098">
    <property type="term" value="C:ESC/E(Z) complex"/>
    <property type="evidence" value="ECO:0000250"/>
    <property type="project" value="UniProtKB"/>
</dbReference>
<dbReference type="GO" id="GO:0031507">
    <property type="term" value="P:heterochromatin formation"/>
    <property type="evidence" value="ECO:0000318"/>
    <property type="project" value="GO_Central"/>
</dbReference>
<dbReference type="GO" id="GO:0000122">
    <property type="term" value="P:negative regulation of transcription by RNA polymerase II"/>
    <property type="evidence" value="ECO:0000318"/>
    <property type="project" value="GO_Central"/>
</dbReference>
<dbReference type="FunFam" id="2.130.10.10:FF:000056">
    <property type="entry name" value="Polycomb protein eed"/>
    <property type="match status" value="1"/>
</dbReference>
<dbReference type="Gene3D" id="2.130.10.10">
    <property type="entry name" value="YVTN repeat-like/Quinoprotein amine dehydrogenase"/>
    <property type="match status" value="1"/>
</dbReference>
<dbReference type="InterPro" id="IPR051243">
    <property type="entry name" value="PcG_WD-repeat"/>
</dbReference>
<dbReference type="InterPro" id="IPR015943">
    <property type="entry name" value="WD40/YVTN_repeat-like_dom_sf"/>
</dbReference>
<dbReference type="InterPro" id="IPR019775">
    <property type="entry name" value="WD40_repeat_CS"/>
</dbReference>
<dbReference type="InterPro" id="IPR036322">
    <property type="entry name" value="WD40_repeat_dom_sf"/>
</dbReference>
<dbReference type="InterPro" id="IPR001680">
    <property type="entry name" value="WD40_rpt"/>
</dbReference>
<dbReference type="PANTHER" id="PTHR10253">
    <property type="entry name" value="POLYCOMB PROTEIN"/>
    <property type="match status" value="1"/>
</dbReference>
<dbReference type="Pfam" id="PF00400">
    <property type="entry name" value="WD40"/>
    <property type="match status" value="2"/>
</dbReference>
<dbReference type="SMART" id="SM00320">
    <property type="entry name" value="WD40"/>
    <property type="match status" value="6"/>
</dbReference>
<dbReference type="SUPFAM" id="SSF50978">
    <property type="entry name" value="WD40 repeat-like"/>
    <property type="match status" value="1"/>
</dbReference>
<dbReference type="PROSITE" id="PS00678">
    <property type="entry name" value="WD_REPEATS_1"/>
    <property type="match status" value="1"/>
</dbReference>
<dbReference type="PROSITE" id="PS50082">
    <property type="entry name" value="WD_REPEATS_2"/>
    <property type="match status" value="2"/>
</dbReference>
<dbReference type="PROSITE" id="PS50294">
    <property type="entry name" value="WD_REPEATS_REGION"/>
    <property type="match status" value="1"/>
</dbReference>